<sequence>MAIEKKFVNDGYVKASMDEYFAEQLNRAGYGGMELNRTPMGTQIIIYSEKPGMVIGKAGKVIRKLTRDVATKYNLENPQIDAQEVKKPELNAQMMASRLAASIERGWYFRKAGHNTIRAVMNAGALGCEVVISGKLTGARSRVEKFVDGYIKHSGHPVEEVVDEGFAVAIKKLGTLGCKVRIIQPGVVLPDSYKVRESVEIEEPAEKPAEKQVEKPAVAPKKEAAKAKAPAPAAAPEPAPTEEPEVAEPEEAEEAQVEASEDFEEAELIYVEGSEEVRRQVNGVWQHKHESYDYWHPMARVHKEAKE</sequence>
<protein>
    <recommendedName>
        <fullName evidence="1">Small ribosomal subunit protein uS3</fullName>
    </recommendedName>
    <alternativeName>
        <fullName evidence="3">30S ribosomal protein S3</fullName>
    </alternativeName>
</protein>
<accession>Q8PV44</accession>
<reference key="1">
    <citation type="journal article" date="2002" name="J. Mol. Microbiol. Biotechnol.">
        <title>The genome of Methanosarcina mazei: evidence for lateral gene transfer between Bacteria and Archaea.</title>
        <authorList>
            <person name="Deppenmeier U."/>
            <person name="Johann A."/>
            <person name="Hartsch T."/>
            <person name="Merkl R."/>
            <person name="Schmitz R.A."/>
            <person name="Martinez-Arias R."/>
            <person name="Henne A."/>
            <person name="Wiezer A."/>
            <person name="Baeumer S."/>
            <person name="Jacobi C."/>
            <person name="Brueggemann H."/>
            <person name="Lienard T."/>
            <person name="Christmann A."/>
            <person name="Boemecke M."/>
            <person name="Steckel S."/>
            <person name="Bhattacharyya A."/>
            <person name="Lykidis A."/>
            <person name="Overbeek R."/>
            <person name="Klenk H.-P."/>
            <person name="Gunsalus R.P."/>
            <person name="Fritz H.-J."/>
            <person name="Gottschalk G."/>
        </authorList>
    </citation>
    <scope>NUCLEOTIDE SEQUENCE [LARGE SCALE GENOMIC DNA]</scope>
    <source>
        <strain>ATCC BAA-159 / DSM 3647 / Goe1 / Go1 / JCM 11833 / OCM 88</strain>
    </source>
</reference>
<feature type="chain" id="PRO_0000130252" description="Small ribosomal subunit protein uS3">
    <location>
        <begin position="1"/>
        <end position="307"/>
    </location>
</feature>
<feature type="domain" description="KH type-2" evidence="1">
    <location>
        <begin position="17"/>
        <end position="86"/>
    </location>
</feature>
<feature type="region of interest" description="Disordered" evidence="2">
    <location>
        <begin position="201"/>
        <end position="265"/>
    </location>
</feature>
<feature type="compositionally biased region" description="Basic and acidic residues" evidence="2">
    <location>
        <begin position="201"/>
        <end position="226"/>
    </location>
</feature>
<feature type="compositionally biased region" description="Acidic residues" evidence="2">
    <location>
        <begin position="240"/>
        <end position="265"/>
    </location>
</feature>
<keyword id="KW-0687">Ribonucleoprotein</keyword>
<keyword id="KW-0689">Ribosomal protein</keyword>
<keyword id="KW-0694">RNA-binding</keyword>
<keyword id="KW-0699">rRNA-binding</keyword>
<dbReference type="EMBL" id="AE008384">
    <property type="protein sequence ID" value="AAM31826.1"/>
    <property type="molecule type" value="Genomic_DNA"/>
</dbReference>
<dbReference type="RefSeq" id="WP_011034061.1">
    <property type="nucleotide sequence ID" value="NC_003901.1"/>
</dbReference>
<dbReference type="SMR" id="Q8PV44"/>
<dbReference type="KEGG" id="mma:MM_2130"/>
<dbReference type="PATRIC" id="fig|192952.21.peg.2444"/>
<dbReference type="eggNOG" id="arCOG04097">
    <property type="taxonomic scope" value="Archaea"/>
</dbReference>
<dbReference type="HOGENOM" id="CLU_058591_1_0_2"/>
<dbReference type="Proteomes" id="UP000000595">
    <property type="component" value="Chromosome"/>
</dbReference>
<dbReference type="GO" id="GO:0022627">
    <property type="term" value="C:cytosolic small ribosomal subunit"/>
    <property type="evidence" value="ECO:0007669"/>
    <property type="project" value="TreeGrafter"/>
</dbReference>
<dbReference type="GO" id="GO:0019843">
    <property type="term" value="F:rRNA binding"/>
    <property type="evidence" value="ECO:0007669"/>
    <property type="project" value="UniProtKB-UniRule"/>
</dbReference>
<dbReference type="GO" id="GO:0003735">
    <property type="term" value="F:structural constituent of ribosome"/>
    <property type="evidence" value="ECO:0007669"/>
    <property type="project" value="InterPro"/>
</dbReference>
<dbReference type="GO" id="GO:0006412">
    <property type="term" value="P:translation"/>
    <property type="evidence" value="ECO:0007669"/>
    <property type="project" value="UniProtKB-UniRule"/>
</dbReference>
<dbReference type="CDD" id="cd02411">
    <property type="entry name" value="KH-II_30S_S3_arch"/>
    <property type="match status" value="1"/>
</dbReference>
<dbReference type="FunFam" id="3.30.1140.32:FF:000012">
    <property type="entry name" value="30S ribosomal protein S3"/>
    <property type="match status" value="1"/>
</dbReference>
<dbReference type="FunFam" id="3.30.300.20:FF:000001">
    <property type="entry name" value="30S ribosomal protein S3"/>
    <property type="match status" value="1"/>
</dbReference>
<dbReference type="Gene3D" id="3.30.300.20">
    <property type="match status" value="1"/>
</dbReference>
<dbReference type="Gene3D" id="3.30.1140.32">
    <property type="entry name" value="Ribosomal protein S3, C-terminal domain"/>
    <property type="match status" value="1"/>
</dbReference>
<dbReference type="HAMAP" id="MF_01309_A">
    <property type="entry name" value="Ribosomal_uS3_A"/>
    <property type="match status" value="1"/>
</dbReference>
<dbReference type="InterPro" id="IPR004087">
    <property type="entry name" value="KH_dom"/>
</dbReference>
<dbReference type="InterPro" id="IPR015946">
    <property type="entry name" value="KH_dom-like_a/b"/>
</dbReference>
<dbReference type="InterPro" id="IPR004044">
    <property type="entry name" value="KH_dom_type_2"/>
</dbReference>
<dbReference type="InterPro" id="IPR009019">
    <property type="entry name" value="KH_sf_prok-type"/>
</dbReference>
<dbReference type="InterPro" id="IPR036419">
    <property type="entry name" value="Ribosomal_S3_C_sf"/>
</dbReference>
<dbReference type="InterPro" id="IPR027488">
    <property type="entry name" value="Ribosomal_uS3_arc"/>
</dbReference>
<dbReference type="InterPro" id="IPR001351">
    <property type="entry name" value="Ribosomal_uS3_C"/>
</dbReference>
<dbReference type="InterPro" id="IPR005703">
    <property type="entry name" value="Ribosomal_uS3_euk/arc"/>
</dbReference>
<dbReference type="NCBIfam" id="NF003219">
    <property type="entry name" value="PRK04191.1"/>
    <property type="match status" value="1"/>
</dbReference>
<dbReference type="NCBIfam" id="TIGR01008">
    <property type="entry name" value="uS3_euk_arch"/>
    <property type="match status" value="1"/>
</dbReference>
<dbReference type="PANTHER" id="PTHR11760">
    <property type="entry name" value="30S/40S RIBOSOMAL PROTEIN S3"/>
    <property type="match status" value="1"/>
</dbReference>
<dbReference type="PANTHER" id="PTHR11760:SF32">
    <property type="entry name" value="SMALL RIBOSOMAL SUBUNIT PROTEIN US3"/>
    <property type="match status" value="1"/>
</dbReference>
<dbReference type="Pfam" id="PF07650">
    <property type="entry name" value="KH_2"/>
    <property type="match status" value="1"/>
</dbReference>
<dbReference type="Pfam" id="PF00189">
    <property type="entry name" value="Ribosomal_S3_C"/>
    <property type="match status" value="1"/>
</dbReference>
<dbReference type="SMART" id="SM00322">
    <property type="entry name" value="KH"/>
    <property type="match status" value="1"/>
</dbReference>
<dbReference type="SUPFAM" id="SSF54814">
    <property type="entry name" value="Prokaryotic type KH domain (KH-domain type II)"/>
    <property type="match status" value="1"/>
</dbReference>
<dbReference type="SUPFAM" id="SSF54821">
    <property type="entry name" value="Ribosomal protein S3 C-terminal domain"/>
    <property type="match status" value="1"/>
</dbReference>
<dbReference type="PROSITE" id="PS50823">
    <property type="entry name" value="KH_TYPE_2"/>
    <property type="match status" value="1"/>
</dbReference>
<gene>
    <name evidence="1" type="primary">rps3</name>
    <name type="ordered locus">MM_2130</name>
</gene>
<evidence type="ECO:0000255" key="1">
    <source>
        <dbReference type="HAMAP-Rule" id="MF_01309"/>
    </source>
</evidence>
<evidence type="ECO:0000256" key="2">
    <source>
        <dbReference type="SAM" id="MobiDB-lite"/>
    </source>
</evidence>
<evidence type="ECO:0000305" key="3"/>
<organism>
    <name type="scientific">Methanosarcina mazei (strain ATCC BAA-159 / DSM 3647 / Goe1 / Go1 / JCM 11833 / OCM 88)</name>
    <name type="common">Methanosarcina frisia</name>
    <dbReference type="NCBI Taxonomy" id="192952"/>
    <lineage>
        <taxon>Archaea</taxon>
        <taxon>Methanobacteriati</taxon>
        <taxon>Methanobacteriota</taxon>
        <taxon>Stenosarchaea group</taxon>
        <taxon>Methanomicrobia</taxon>
        <taxon>Methanosarcinales</taxon>
        <taxon>Methanosarcinaceae</taxon>
        <taxon>Methanosarcina</taxon>
    </lineage>
</organism>
<name>RS3_METMA</name>
<comment type="function">
    <text evidence="1">Binds the lower part of the 30S subunit head.</text>
</comment>
<comment type="subunit">
    <text evidence="1">Part of the 30S ribosomal subunit.</text>
</comment>
<comment type="similarity">
    <text evidence="1">Belongs to the universal ribosomal protein uS3 family.</text>
</comment>
<proteinExistence type="inferred from homology"/>